<comment type="function">
    <text evidence="1">Specifically methylates the uridine in position 2552 of 23S rRNA at the 2'-O position of the ribose in the fully assembled 50S ribosomal subunit.</text>
</comment>
<comment type="catalytic activity">
    <reaction evidence="1">
        <text>uridine(2552) in 23S rRNA + S-adenosyl-L-methionine = 2'-O-methyluridine(2552) in 23S rRNA + S-adenosyl-L-homocysteine + H(+)</text>
        <dbReference type="Rhea" id="RHEA:42720"/>
        <dbReference type="Rhea" id="RHEA-COMP:10202"/>
        <dbReference type="Rhea" id="RHEA-COMP:10203"/>
        <dbReference type="ChEBI" id="CHEBI:15378"/>
        <dbReference type="ChEBI" id="CHEBI:57856"/>
        <dbReference type="ChEBI" id="CHEBI:59789"/>
        <dbReference type="ChEBI" id="CHEBI:65315"/>
        <dbReference type="ChEBI" id="CHEBI:74478"/>
        <dbReference type="EC" id="2.1.1.166"/>
    </reaction>
</comment>
<comment type="subcellular location">
    <subcellularLocation>
        <location evidence="1">Cytoplasm</location>
    </subcellularLocation>
</comment>
<comment type="similarity">
    <text evidence="1">Belongs to the class I-like SAM-binding methyltransferase superfamily. RNA methyltransferase RlmE family.</text>
</comment>
<proteinExistence type="inferred from homology"/>
<organism>
    <name type="scientific">Acinetobacter baumannii (strain ACICU)</name>
    <dbReference type="NCBI Taxonomy" id="405416"/>
    <lineage>
        <taxon>Bacteria</taxon>
        <taxon>Pseudomonadati</taxon>
        <taxon>Pseudomonadota</taxon>
        <taxon>Gammaproteobacteria</taxon>
        <taxon>Moraxellales</taxon>
        <taxon>Moraxellaceae</taxon>
        <taxon>Acinetobacter</taxon>
        <taxon>Acinetobacter calcoaceticus/baumannii complex</taxon>
    </lineage>
</organism>
<protein>
    <recommendedName>
        <fullName evidence="1">Ribosomal RNA large subunit methyltransferase E</fullName>
        <ecNumber evidence="1">2.1.1.166</ecNumber>
    </recommendedName>
    <alternativeName>
        <fullName evidence="1">23S rRNA Um2552 methyltransferase</fullName>
    </alternativeName>
    <alternativeName>
        <fullName evidence="1">rRNA (uridine-2'-O-)-methyltransferase</fullName>
    </alternativeName>
</protein>
<name>RLME_ACIBC</name>
<feature type="chain" id="PRO_1000194969" description="Ribosomal RNA large subunit methyltransferase E">
    <location>
        <begin position="1"/>
        <end position="216"/>
    </location>
</feature>
<feature type="active site" description="Proton acceptor" evidence="1">
    <location>
        <position position="168"/>
    </location>
</feature>
<feature type="binding site" evidence="1">
    <location>
        <position position="67"/>
    </location>
    <ligand>
        <name>S-adenosyl-L-methionine</name>
        <dbReference type="ChEBI" id="CHEBI:59789"/>
    </ligand>
</feature>
<feature type="binding site" evidence="1">
    <location>
        <position position="69"/>
    </location>
    <ligand>
        <name>S-adenosyl-L-methionine</name>
        <dbReference type="ChEBI" id="CHEBI:59789"/>
    </ligand>
</feature>
<feature type="binding site" evidence="1">
    <location>
        <position position="87"/>
    </location>
    <ligand>
        <name>S-adenosyl-L-methionine</name>
        <dbReference type="ChEBI" id="CHEBI:59789"/>
    </ligand>
</feature>
<feature type="binding site" evidence="1">
    <location>
        <position position="103"/>
    </location>
    <ligand>
        <name>S-adenosyl-L-methionine</name>
        <dbReference type="ChEBI" id="CHEBI:59789"/>
    </ligand>
</feature>
<feature type="binding site" evidence="1">
    <location>
        <position position="128"/>
    </location>
    <ligand>
        <name>S-adenosyl-L-methionine</name>
        <dbReference type="ChEBI" id="CHEBI:59789"/>
    </ligand>
</feature>
<evidence type="ECO:0000255" key="1">
    <source>
        <dbReference type="HAMAP-Rule" id="MF_01547"/>
    </source>
</evidence>
<keyword id="KW-0963">Cytoplasm</keyword>
<keyword id="KW-0489">Methyltransferase</keyword>
<keyword id="KW-0698">rRNA processing</keyword>
<keyword id="KW-0949">S-adenosyl-L-methionine</keyword>
<keyword id="KW-0808">Transferase</keyword>
<gene>
    <name evidence="1" type="primary">rlmE</name>
    <name evidence="1" type="synonym">ftsJ</name>
    <name evidence="1" type="synonym">rrmJ</name>
    <name type="ordered locus">ACICU_02925</name>
</gene>
<dbReference type="EC" id="2.1.1.166" evidence="1"/>
<dbReference type="EMBL" id="CP000863">
    <property type="protein sequence ID" value="ACC58237.1"/>
    <property type="molecule type" value="Genomic_DNA"/>
</dbReference>
<dbReference type="RefSeq" id="WP_000235573.1">
    <property type="nucleotide sequence ID" value="NZ_CP031380.1"/>
</dbReference>
<dbReference type="SMR" id="B2HXD3"/>
<dbReference type="GeneID" id="92894959"/>
<dbReference type="KEGG" id="abc:ACICU_02925"/>
<dbReference type="HOGENOM" id="CLU_009422_4_0_6"/>
<dbReference type="Proteomes" id="UP000008839">
    <property type="component" value="Chromosome"/>
</dbReference>
<dbReference type="GO" id="GO:0005737">
    <property type="term" value="C:cytoplasm"/>
    <property type="evidence" value="ECO:0007669"/>
    <property type="project" value="UniProtKB-SubCell"/>
</dbReference>
<dbReference type="GO" id="GO:0008650">
    <property type="term" value="F:rRNA (uridine-2'-O-)-methyltransferase activity"/>
    <property type="evidence" value="ECO:0007669"/>
    <property type="project" value="UniProtKB-UniRule"/>
</dbReference>
<dbReference type="FunFam" id="3.40.50.150:FF:000005">
    <property type="entry name" value="Ribosomal RNA large subunit methyltransferase E"/>
    <property type="match status" value="1"/>
</dbReference>
<dbReference type="Gene3D" id="3.40.50.150">
    <property type="entry name" value="Vaccinia Virus protein VP39"/>
    <property type="match status" value="1"/>
</dbReference>
<dbReference type="HAMAP" id="MF_01547">
    <property type="entry name" value="RNA_methyltr_E"/>
    <property type="match status" value="1"/>
</dbReference>
<dbReference type="InterPro" id="IPR050082">
    <property type="entry name" value="RNA_methyltr_RlmE"/>
</dbReference>
<dbReference type="InterPro" id="IPR002877">
    <property type="entry name" value="RNA_MeTrfase_FtsJ_dom"/>
</dbReference>
<dbReference type="InterPro" id="IPR015507">
    <property type="entry name" value="rRNA-MeTfrase_E"/>
</dbReference>
<dbReference type="InterPro" id="IPR029063">
    <property type="entry name" value="SAM-dependent_MTases_sf"/>
</dbReference>
<dbReference type="NCBIfam" id="NF008390">
    <property type="entry name" value="PRK11188.1"/>
    <property type="match status" value="1"/>
</dbReference>
<dbReference type="PANTHER" id="PTHR10920">
    <property type="entry name" value="RIBOSOMAL RNA METHYLTRANSFERASE"/>
    <property type="match status" value="1"/>
</dbReference>
<dbReference type="PANTHER" id="PTHR10920:SF18">
    <property type="entry name" value="RRNA METHYLTRANSFERASE 2, MITOCHONDRIAL"/>
    <property type="match status" value="1"/>
</dbReference>
<dbReference type="Pfam" id="PF01728">
    <property type="entry name" value="FtsJ"/>
    <property type="match status" value="1"/>
</dbReference>
<dbReference type="PIRSF" id="PIRSF005461">
    <property type="entry name" value="23S_rRNA_mtase"/>
    <property type="match status" value="1"/>
</dbReference>
<dbReference type="SUPFAM" id="SSF53335">
    <property type="entry name" value="S-adenosyl-L-methionine-dependent methyltransferases"/>
    <property type="match status" value="1"/>
</dbReference>
<accession>B2HXD3</accession>
<reference key="1">
    <citation type="journal article" date="2008" name="Antimicrob. Agents Chemother.">
        <title>Whole-genome pyrosequencing of an epidemic multidrug-resistant Acinetobacter baumannii strain belonging to the European clone II group.</title>
        <authorList>
            <person name="Iacono M."/>
            <person name="Villa L."/>
            <person name="Fortini D."/>
            <person name="Bordoni R."/>
            <person name="Imperi F."/>
            <person name="Bonnal R.J."/>
            <person name="Sicheritz-Ponten T."/>
            <person name="De Bellis G."/>
            <person name="Visca P."/>
            <person name="Cassone A."/>
            <person name="Carattoli A."/>
        </authorList>
    </citation>
    <scope>NUCLEOTIDE SEQUENCE [LARGE SCALE GENOMIC DNA]</scope>
    <source>
        <strain>ACICU</strain>
    </source>
</reference>
<sequence length="216" mass="23927">MATRITNQKLSKSSRAWMREHLDDPFVKKAQKEGYRARAAYKLLEIQEKYKLIKPGMTVVDLGAAPGSWSQIAGKLVGSKGLVIASDILPMDALPDVTFLQGDFREEAVFEKLLNILNGRQVDIVISDMAPNTSGNRAVDQPRQIYLCELALDFAQKVLGPNGQFVVKVFQGAGFDEFRKQVVDSFDVLKTAKPAASRARSKEVFLVGQGRKKALQ</sequence>